<name>YGFZ_YERP3</name>
<accession>A7FF28</accession>
<protein>
    <recommendedName>
        <fullName evidence="1">tRNA-modifying protein YgfZ</fullName>
    </recommendedName>
</protein>
<gene>
    <name type="ordered locus">YpsIP31758_0872</name>
</gene>
<sequence>MAYHTPFAAQPPVASSGLPLTLISLDDWALVTLTGADRVKYLQGQVTADIDALSADQHVLCAHCDAKGKMWSNLRLFYRGEGLAFIERRSLLDNQLSELKKYAVFSKVVIAPQPDAVLIGVAGSQAKTALAEIFTELPSAEHPVTQMGNSTLLHFSLPAERFLLVTDTEQAQQLVEKLAGRAQFNDSKQWLALDIEAGFPIIDAANSAQFIPQATNIQALNGISFTKGCYTGQEMVARAKYRGANKRALYWLAGNASRVPAAGEDLEWQLGENWRRTGTVLSAIQLNDGTVWVQAVLNNDLAADSVLRVRDDALGTLAIQPLPYSLAEDK</sequence>
<reference key="1">
    <citation type="journal article" date="2007" name="PLoS Genet.">
        <title>The complete genome sequence of Yersinia pseudotuberculosis IP31758, the causative agent of Far East scarlet-like fever.</title>
        <authorList>
            <person name="Eppinger M."/>
            <person name="Rosovitz M.J."/>
            <person name="Fricke W.F."/>
            <person name="Rasko D.A."/>
            <person name="Kokorina G."/>
            <person name="Fayolle C."/>
            <person name="Lindler L.E."/>
            <person name="Carniel E."/>
            <person name="Ravel J."/>
        </authorList>
    </citation>
    <scope>NUCLEOTIDE SEQUENCE [LARGE SCALE GENOMIC DNA]</scope>
    <source>
        <strain>IP 31758</strain>
    </source>
</reference>
<keyword id="KW-0963">Cytoplasm</keyword>
<keyword id="KW-0290">Folate-binding</keyword>
<keyword id="KW-0819">tRNA processing</keyword>
<dbReference type="EMBL" id="CP000720">
    <property type="protein sequence ID" value="ABS45879.1"/>
    <property type="molecule type" value="Genomic_DNA"/>
</dbReference>
<dbReference type="SMR" id="A7FF28"/>
<dbReference type="KEGG" id="ypi:YpsIP31758_0872"/>
<dbReference type="HOGENOM" id="CLU_007884_6_1_6"/>
<dbReference type="Proteomes" id="UP000002412">
    <property type="component" value="Chromosome"/>
</dbReference>
<dbReference type="GO" id="GO:0005737">
    <property type="term" value="C:cytoplasm"/>
    <property type="evidence" value="ECO:0007669"/>
    <property type="project" value="UniProtKB-SubCell"/>
</dbReference>
<dbReference type="GO" id="GO:0005542">
    <property type="term" value="F:folic acid binding"/>
    <property type="evidence" value="ECO:0007669"/>
    <property type="project" value="UniProtKB-UniRule"/>
</dbReference>
<dbReference type="GO" id="GO:0016226">
    <property type="term" value="P:iron-sulfur cluster assembly"/>
    <property type="evidence" value="ECO:0007669"/>
    <property type="project" value="TreeGrafter"/>
</dbReference>
<dbReference type="GO" id="GO:0009451">
    <property type="term" value="P:RNA modification"/>
    <property type="evidence" value="ECO:0007669"/>
    <property type="project" value="InterPro"/>
</dbReference>
<dbReference type="GO" id="GO:0008033">
    <property type="term" value="P:tRNA processing"/>
    <property type="evidence" value="ECO:0007669"/>
    <property type="project" value="UniProtKB-UniRule"/>
</dbReference>
<dbReference type="FunFam" id="2.40.30.160:FF:000001">
    <property type="entry name" value="tRNA-modifying protein YgfZ"/>
    <property type="match status" value="1"/>
</dbReference>
<dbReference type="FunFam" id="3.30.70.1400:FF:000002">
    <property type="entry name" value="tRNA-modifying protein YgfZ"/>
    <property type="match status" value="1"/>
</dbReference>
<dbReference type="FunFam" id="3.30.70.1630:FF:000001">
    <property type="entry name" value="tRNA-modifying protein YgfZ"/>
    <property type="match status" value="1"/>
</dbReference>
<dbReference type="Gene3D" id="2.40.30.160">
    <property type="match status" value="1"/>
</dbReference>
<dbReference type="Gene3D" id="3.30.70.1630">
    <property type="match status" value="1"/>
</dbReference>
<dbReference type="Gene3D" id="3.30.70.1400">
    <property type="entry name" value="Aminomethyltransferase beta-barrel domains"/>
    <property type="match status" value="1"/>
</dbReference>
<dbReference type="HAMAP" id="MF_01175">
    <property type="entry name" value="tRNA_modifying_YgfZ"/>
    <property type="match status" value="1"/>
</dbReference>
<dbReference type="InterPro" id="IPR029043">
    <property type="entry name" value="GcvT/YgfZ_C"/>
</dbReference>
<dbReference type="InterPro" id="IPR023758">
    <property type="entry name" value="tRNA-modifying_YgfZ"/>
</dbReference>
<dbReference type="InterPro" id="IPR045179">
    <property type="entry name" value="YgfZ/GcvT"/>
</dbReference>
<dbReference type="InterPro" id="IPR017703">
    <property type="entry name" value="YgfZ/GcvT_CS"/>
</dbReference>
<dbReference type="InterPro" id="IPR048451">
    <property type="entry name" value="YgfZ_barrel"/>
</dbReference>
<dbReference type="NCBIfam" id="NF007110">
    <property type="entry name" value="PRK09559.1"/>
    <property type="match status" value="1"/>
</dbReference>
<dbReference type="NCBIfam" id="TIGR03317">
    <property type="entry name" value="ygfZ_signature"/>
    <property type="match status" value="1"/>
</dbReference>
<dbReference type="PANTHER" id="PTHR22602">
    <property type="entry name" value="TRANSFERASE CAF17, MITOCHONDRIAL-RELATED"/>
    <property type="match status" value="1"/>
</dbReference>
<dbReference type="PANTHER" id="PTHR22602:SF0">
    <property type="entry name" value="TRANSFERASE CAF17, MITOCHONDRIAL-RELATED"/>
    <property type="match status" value="1"/>
</dbReference>
<dbReference type="Pfam" id="PF21130">
    <property type="entry name" value="YgfZ_barrel"/>
    <property type="match status" value="1"/>
</dbReference>
<dbReference type="SUPFAM" id="SSF101790">
    <property type="entry name" value="Aminomethyltransferase beta-barrel domain"/>
    <property type="match status" value="1"/>
</dbReference>
<dbReference type="SUPFAM" id="SSF103025">
    <property type="entry name" value="Folate-binding domain"/>
    <property type="match status" value="1"/>
</dbReference>
<organism>
    <name type="scientific">Yersinia pseudotuberculosis serotype O:1b (strain IP 31758)</name>
    <dbReference type="NCBI Taxonomy" id="349747"/>
    <lineage>
        <taxon>Bacteria</taxon>
        <taxon>Pseudomonadati</taxon>
        <taxon>Pseudomonadota</taxon>
        <taxon>Gammaproteobacteria</taxon>
        <taxon>Enterobacterales</taxon>
        <taxon>Yersiniaceae</taxon>
        <taxon>Yersinia</taxon>
    </lineage>
</organism>
<proteinExistence type="inferred from homology"/>
<evidence type="ECO:0000255" key="1">
    <source>
        <dbReference type="HAMAP-Rule" id="MF_01175"/>
    </source>
</evidence>
<comment type="function">
    <text evidence="1">Folate-binding protein involved in regulating the level of ATP-DnaA and in the modification of some tRNAs. It is probably a key factor in regulatory networks that act via tRNA modification, such as initiation of chromosomal replication.</text>
</comment>
<comment type="subcellular location">
    <subcellularLocation>
        <location evidence="1">Cytoplasm</location>
    </subcellularLocation>
</comment>
<comment type="similarity">
    <text evidence="1">Belongs to the tRNA-modifying YgfZ family.</text>
</comment>
<feature type="chain" id="PRO_1000065781" description="tRNA-modifying protein YgfZ">
    <location>
        <begin position="1"/>
        <end position="330"/>
    </location>
</feature>
<feature type="binding site" evidence="1">
    <location>
        <position position="28"/>
    </location>
    <ligand>
        <name>folate</name>
        <dbReference type="ChEBI" id="CHEBI:62501"/>
    </ligand>
</feature>
<feature type="binding site" evidence="1">
    <location>
        <position position="190"/>
    </location>
    <ligand>
        <name>folate</name>
        <dbReference type="ChEBI" id="CHEBI:62501"/>
    </ligand>
</feature>